<proteinExistence type="inferred from homology"/>
<feature type="chain" id="PRO_0000245881" description="FMN-dependent NADH:quinone oxidoreductase 1">
    <location>
        <begin position="1"/>
        <end position="208"/>
    </location>
</feature>
<comment type="function">
    <text evidence="1">Quinone reductase that provides resistance to thiol-specific stress caused by electrophilic quinones.</text>
</comment>
<comment type="function">
    <text evidence="1">Also exhibits azoreductase activity. Catalyzes the reductive cleavage of the azo bond in aromatic azo compounds to the corresponding amines.</text>
</comment>
<comment type="catalytic activity">
    <reaction evidence="1">
        <text>2 a quinone + NADH + H(+) = 2 a 1,4-benzosemiquinone + NAD(+)</text>
        <dbReference type="Rhea" id="RHEA:65952"/>
        <dbReference type="ChEBI" id="CHEBI:15378"/>
        <dbReference type="ChEBI" id="CHEBI:57540"/>
        <dbReference type="ChEBI" id="CHEBI:57945"/>
        <dbReference type="ChEBI" id="CHEBI:132124"/>
        <dbReference type="ChEBI" id="CHEBI:134225"/>
    </reaction>
</comment>
<comment type="catalytic activity">
    <reaction evidence="1">
        <text>N,N-dimethyl-1,4-phenylenediamine + anthranilate + 2 NAD(+) = 2-(4-dimethylaminophenyl)diazenylbenzoate + 2 NADH + 2 H(+)</text>
        <dbReference type="Rhea" id="RHEA:55872"/>
        <dbReference type="ChEBI" id="CHEBI:15378"/>
        <dbReference type="ChEBI" id="CHEBI:15783"/>
        <dbReference type="ChEBI" id="CHEBI:16567"/>
        <dbReference type="ChEBI" id="CHEBI:57540"/>
        <dbReference type="ChEBI" id="CHEBI:57945"/>
        <dbReference type="ChEBI" id="CHEBI:71579"/>
        <dbReference type="EC" id="1.7.1.17"/>
    </reaction>
</comment>
<comment type="cofactor">
    <cofactor evidence="1">
        <name>FMN</name>
        <dbReference type="ChEBI" id="CHEBI:58210"/>
    </cofactor>
    <text evidence="1">Binds 1 FMN per subunit.</text>
</comment>
<comment type="subunit">
    <text evidence="1">Homodimer.</text>
</comment>
<comment type="similarity">
    <text evidence="1">Belongs to the azoreductase type 1 family.</text>
</comment>
<name>AZOR1_BACCR</name>
<sequence length="208" mass="23024">MSKVLFVKANDRPAEQAVSSKMYETFVSTYKEANPNTEITELDLFALDLPYYGNIAISGGYKRSQGMELTAEEEKAVATVDQYLNQFLEADKVVFAFPLWNFTVPAPLITYISYLSQAGKTFKYTANGPEGLVGGKKVVVLGARGSDYSSEQMAPMEMAVNYVTTVLGFWGITNPETVVIEGHNQYPDRSQQIVEEGLENVKKVAAKF</sequence>
<organism>
    <name type="scientific">Bacillus cereus (strain ATCC 14579 / DSM 31 / CCUG 7414 / JCM 2152 / NBRC 15305 / NCIMB 9373 / NCTC 2599 / NRRL B-3711)</name>
    <dbReference type="NCBI Taxonomy" id="226900"/>
    <lineage>
        <taxon>Bacteria</taxon>
        <taxon>Bacillati</taxon>
        <taxon>Bacillota</taxon>
        <taxon>Bacilli</taxon>
        <taxon>Bacillales</taxon>
        <taxon>Bacillaceae</taxon>
        <taxon>Bacillus</taxon>
        <taxon>Bacillus cereus group</taxon>
    </lineage>
</organism>
<accession>Q81EX6</accession>
<dbReference type="EC" id="1.6.5.-" evidence="1"/>
<dbReference type="EC" id="1.7.1.17" evidence="1"/>
<dbReference type="EMBL" id="AE016877">
    <property type="protein sequence ID" value="AAP08809.1"/>
    <property type="molecule type" value="Genomic_DNA"/>
</dbReference>
<dbReference type="RefSeq" id="NP_831608.1">
    <property type="nucleotide sequence ID" value="NC_004722.1"/>
</dbReference>
<dbReference type="SMR" id="Q81EX6"/>
<dbReference type="STRING" id="226900.BC_1835"/>
<dbReference type="KEGG" id="bce:BC1835"/>
<dbReference type="PATRIC" id="fig|226900.8.peg.1826"/>
<dbReference type="HOGENOM" id="CLU_088964_3_1_9"/>
<dbReference type="Proteomes" id="UP000001417">
    <property type="component" value="Chromosome"/>
</dbReference>
<dbReference type="GO" id="GO:0009055">
    <property type="term" value="F:electron transfer activity"/>
    <property type="evidence" value="ECO:0007669"/>
    <property type="project" value="UniProtKB-UniRule"/>
</dbReference>
<dbReference type="GO" id="GO:0010181">
    <property type="term" value="F:FMN binding"/>
    <property type="evidence" value="ECO:0007669"/>
    <property type="project" value="UniProtKB-UniRule"/>
</dbReference>
<dbReference type="GO" id="GO:0016652">
    <property type="term" value="F:oxidoreductase activity, acting on NAD(P)H as acceptor"/>
    <property type="evidence" value="ECO:0007669"/>
    <property type="project" value="UniProtKB-UniRule"/>
</dbReference>
<dbReference type="GO" id="GO:0016655">
    <property type="term" value="F:oxidoreductase activity, acting on NAD(P)H, quinone or similar compound as acceptor"/>
    <property type="evidence" value="ECO:0007669"/>
    <property type="project" value="InterPro"/>
</dbReference>
<dbReference type="Gene3D" id="3.40.50.360">
    <property type="match status" value="1"/>
</dbReference>
<dbReference type="HAMAP" id="MF_01216">
    <property type="entry name" value="Azoreductase_type1"/>
    <property type="match status" value="1"/>
</dbReference>
<dbReference type="InterPro" id="IPR003680">
    <property type="entry name" value="Flavodoxin_fold"/>
</dbReference>
<dbReference type="InterPro" id="IPR029039">
    <property type="entry name" value="Flavoprotein-like_sf"/>
</dbReference>
<dbReference type="InterPro" id="IPR050104">
    <property type="entry name" value="FMN-dep_NADH:Q_OxRdtase_AzoR1"/>
</dbReference>
<dbReference type="InterPro" id="IPR023048">
    <property type="entry name" value="NADH:quinone_OxRdtase_FMN_depd"/>
</dbReference>
<dbReference type="NCBIfam" id="NF010074">
    <property type="entry name" value="PRK13555.1"/>
    <property type="match status" value="1"/>
</dbReference>
<dbReference type="NCBIfam" id="NF010075">
    <property type="entry name" value="PRK13556.1"/>
    <property type="match status" value="1"/>
</dbReference>
<dbReference type="PANTHER" id="PTHR43741">
    <property type="entry name" value="FMN-DEPENDENT NADH-AZOREDUCTASE 1"/>
    <property type="match status" value="1"/>
</dbReference>
<dbReference type="PANTHER" id="PTHR43741:SF4">
    <property type="entry name" value="FMN-DEPENDENT NADH:QUINONE OXIDOREDUCTASE"/>
    <property type="match status" value="1"/>
</dbReference>
<dbReference type="Pfam" id="PF02525">
    <property type="entry name" value="Flavodoxin_2"/>
    <property type="match status" value="1"/>
</dbReference>
<dbReference type="SUPFAM" id="SSF52218">
    <property type="entry name" value="Flavoproteins"/>
    <property type="match status" value="1"/>
</dbReference>
<reference key="1">
    <citation type="journal article" date="2003" name="Nature">
        <title>Genome sequence of Bacillus cereus and comparative analysis with Bacillus anthracis.</title>
        <authorList>
            <person name="Ivanova N."/>
            <person name="Sorokin A."/>
            <person name="Anderson I."/>
            <person name="Galleron N."/>
            <person name="Candelon B."/>
            <person name="Kapatral V."/>
            <person name="Bhattacharyya A."/>
            <person name="Reznik G."/>
            <person name="Mikhailova N."/>
            <person name="Lapidus A."/>
            <person name="Chu L."/>
            <person name="Mazur M."/>
            <person name="Goltsman E."/>
            <person name="Larsen N."/>
            <person name="D'Souza M."/>
            <person name="Walunas T."/>
            <person name="Grechkin Y."/>
            <person name="Pusch G."/>
            <person name="Haselkorn R."/>
            <person name="Fonstein M."/>
            <person name="Ehrlich S.D."/>
            <person name="Overbeek R."/>
            <person name="Kyrpides N.C."/>
        </authorList>
    </citation>
    <scope>NUCLEOTIDE SEQUENCE [LARGE SCALE GENOMIC DNA]</scope>
    <source>
        <strain>ATCC 14579 / DSM 31 / CCUG 7414 / JCM 2152 / NBRC 15305 / NCIMB 9373 / NCTC 2599 / NRRL B-3711</strain>
    </source>
</reference>
<keyword id="KW-0285">Flavoprotein</keyword>
<keyword id="KW-0288">FMN</keyword>
<keyword id="KW-0520">NAD</keyword>
<keyword id="KW-0560">Oxidoreductase</keyword>
<keyword id="KW-1185">Reference proteome</keyword>
<evidence type="ECO:0000255" key="1">
    <source>
        <dbReference type="HAMAP-Rule" id="MF_01216"/>
    </source>
</evidence>
<gene>
    <name evidence="1" type="primary">azoR1</name>
    <name type="ordered locus">BC_1835</name>
</gene>
<protein>
    <recommendedName>
        <fullName evidence="1">FMN-dependent NADH:quinone oxidoreductase 1</fullName>
        <ecNumber evidence="1">1.6.5.-</ecNumber>
    </recommendedName>
    <alternativeName>
        <fullName evidence="1">Azo-dye reductase 1</fullName>
    </alternativeName>
    <alternativeName>
        <fullName evidence="1">FMN-dependent NADH-azo compound oxidoreductase 1</fullName>
    </alternativeName>
    <alternativeName>
        <fullName evidence="1">FMN-dependent NADH-azoreductase 1</fullName>
        <ecNumber evidence="1">1.7.1.17</ecNumber>
    </alternativeName>
</protein>